<evidence type="ECO:0000255" key="1">
    <source>
        <dbReference type="HAMAP-Rule" id="MF_01685"/>
    </source>
</evidence>
<proteinExistence type="inferred from homology"/>
<sequence>MAEKIYDVTIIGGGPAGMFASFYCGLHELDAQLIESLPQLGGQVGALYPEKQVWDVAGMPGVTGHDLIAKLEEQMAVAPIDQFLGETVEDVIKGDDGTFTIKSAKRVSRSRAVIIALGNGAFTPRKLALEGAAEIEGKQLSYFVNHKADYADKRVAILGGGDSAIDIALMLEPVAKEVHLVHRRDQFRGLEHTVTQLKQSSVQLDTPFLPRALTVEDDETVTLDLKKMRSDDEAQLNVDKIVVNYGFTSNNAALNQWSLDLAAEHNLIKVDSMMETSTEGVYAIGDGVTYPGKVALIAAGFGEAPTAVTALAKKLYPDKRMAMHSSSMGITK</sequence>
<protein>
    <recommendedName>
        <fullName evidence="1">Ferredoxin--NADP reductase</fullName>
        <shortName evidence="1">FNR</shortName>
        <shortName evidence="1">Fd-NADP(+) reductase</shortName>
        <ecNumber evidence="1">1.18.1.2</ecNumber>
    </recommendedName>
</protein>
<name>FENR_LIMRD</name>
<comment type="catalytic activity">
    <reaction evidence="1">
        <text>2 reduced [2Fe-2S]-[ferredoxin] + NADP(+) + H(+) = 2 oxidized [2Fe-2S]-[ferredoxin] + NADPH</text>
        <dbReference type="Rhea" id="RHEA:20125"/>
        <dbReference type="Rhea" id="RHEA-COMP:10000"/>
        <dbReference type="Rhea" id="RHEA-COMP:10001"/>
        <dbReference type="ChEBI" id="CHEBI:15378"/>
        <dbReference type="ChEBI" id="CHEBI:33737"/>
        <dbReference type="ChEBI" id="CHEBI:33738"/>
        <dbReference type="ChEBI" id="CHEBI:57783"/>
        <dbReference type="ChEBI" id="CHEBI:58349"/>
        <dbReference type="EC" id="1.18.1.2"/>
    </reaction>
</comment>
<comment type="cofactor">
    <cofactor evidence="1">
        <name>FAD</name>
        <dbReference type="ChEBI" id="CHEBI:57692"/>
    </cofactor>
    <text evidence="1">Binds 1 FAD per subunit.</text>
</comment>
<comment type="subunit">
    <text evidence="1">Homodimer.</text>
</comment>
<comment type="similarity">
    <text evidence="1">Belongs to the ferredoxin--NADP reductase type 2 family.</text>
</comment>
<gene>
    <name type="ordered locus">Lreu_1657</name>
</gene>
<organism>
    <name type="scientific">Limosilactobacillus reuteri (strain DSM 20016)</name>
    <name type="common">Lactobacillus reuteri</name>
    <dbReference type="NCBI Taxonomy" id="557436"/>
    <lineage>
        <taxon>Bacteria</taxon>
        <taxon>Bacillati</taxon>
        <taxon>Bacillota</taxon>
        <taxon>Bacilli</taxon>
        <taxon>Lactobacillales</taxon>
        <taxon>Lactobacillaceae</taxon>
        <taxon>Limosilactobacillus</taxon>
    </lineage>
</organism>
<dbReference type="EC" id="1.18.1.2" evidence="1"/>
<dbReference type="EMBL" id="CP000705">
    <property type="protein sequence ID" value="ABQ83896.1"/>
    <property type="molecule type" value="Genomic_DNA"/>
</dbReference>
<dbReference type="RefSeq" id="WP_003669058.1">
    <property type="nucleotide sequence ID" value="NC_009513.1"/>
</dbReference>
<dbReference type="SMR" id="A5VM22"/>
<dbReference type="STRING" id="557436.Lreu_1657"/>
<dbReference type="KEGG" id="lre:Lreu_1657"/>
<dbReference type="PATRIC" id="fig|557436.17.peg.225"/>
<dbReference type="eggNOG" id="COG0492">
    <property type="taxonomic scope" value="Bacteria"/>
</dbReference>
<dbReference type="HOGENOM" id="CLU_031864_5_5_9"/>
<dbReference type="OMA" id="TLMCQSA"/>
<dbReference type="Proteomes" id="UP000001991">
    <property type="component" value="Chromosome"/>
</dbReference>
<dbReference type="GO" id="GO:0004324">
    <property type="term" value="F:ferredoxin-NADP+ reductase activity"/>
    <property type="evidence" value="ECO:0007669"/>
    <property type="project" value="UniProtKB-UniRule"/>
</dbReference>
<dbReference type="GO" id="GO:0050660">
    <property type="term" value="F:flavin adenine dinucleotide binding"/>
    <property type="evidence" value="ECO:0007669"/>
    <property type="project" value="UniProtKB-UniRule"/>
</dbReference>
<dbReference type="GO" id="GO:0050661">
    <property type="term" value="F:NADP binding"/>
    <property type="evidence" value="ECO:0007669"/>
    <property type="project" value="UniProtKB-UniRule"/>
</dbReference>
<dbReference type="Gene3D" id="3.50.50.60">
    <property type="entry name" value="FAD/NAD(P)-binding domain"/>
    <property type="match status" value="2"/>
</dbReference>
<dbReference type="HAMAP" id="MF_01685">
    <property type="entry name" value="FENR2"/>
    <property type="match status" value="1"/>
</dbReference>
<dbReference type="InterPro" id="IPR036188">
    <property type="entry name" value="FAD/NAD-bd_sf"/>
</dbReference>
<dbReference type="InterPro" id="IPR023753">
    <property type="entry name" value="FAD/NAD-binding_dom"/>
</dbReference>
<dbReference type="InterPro" id="IPR022890">
    <property type="entry name" value="Fd--NADP_Rdtase_type_2"/>
</dbReference>
<dbReference type="InterPro" id="IPR050097">
    <property type="entry name" value="Ferredoxin-NADP_redctase_2"/>
</dbReference>
<dbReference type="PANTHER" id="PTHR48105">
    <property type="entry name" value="THIOREDOXIN REDUCTASE 1-RELATED-RELATED"/>
    <property type="match status" value="1"/>
</dbReference>
<dbReference type="Pfam" id="PF07992">
    <property type="entry name" value="Pyr_redox_2"/>
    <property type="match status" value="1"/>
</dbReference>
<dbReference type="PRINTS" id="PR00368">
    <property type="entry name" value="FADPNR"/>
</dbReference>
<dbReference type="PRINTS" id="PR00469">
    <property type="entry name" value="PNDRDTASEII"/>
</dbReference>
<dbReference type="SUPFAM" id="SSF51905">
    <property type="entry name" value="FAD/NAD(P)-binding domain"/>
    <property type="match status" value="1"/>
</dbReference>
<accession>A5VM22</accession>
<reference key="1">
    <citation type="journal article" date="2011" name="PLoS Genet.">
        <title>The evolution of host specialization in the vertebrate gut symbiont Lactobacillus reuteri.</title>
        <authorList>
            <person name="Frese S.A."/>
            <person name="Benson A.K."/>
            <person name="Tannock G.W."/>
            <person name="Loach D.M."/>
            <person name="Kim J."/>
            <person name="Zhang M."/>
            <person name="Oh P.L."/>
            <person name="Heng N.C."/>
            <person name="Patil P.B."/>
            <person name="Juge N."/>
            <person name="Mackenzie D.A."/>
            <person name="Pearson B.M."/>
            <person name="Lapidus A."/>
            <person name="Dalin E."/>
            <person name="Tice H."/>
            <person name="Goltsman E."/>
            <person name="Land M."/>
            <person name="Hauser L."/>
            <person name="Ivanova N."/>
            <person name="Kyrpides N.C."/>
            <person name="Walter J."/>
        </authorList>
    </citation>
    <scope>NUCLEOTIDE SEQUENCE [LARGE SCALE GENOMIC DNA]</scope>
    <source>
        <strain>DSM 20016</strain>
    </source>
</reference>
<feature type="chain" id="PRO_0000364858" description="Ferredoxin--NADP reductase">
    <location>
        <begin position="1"/>
        <end position="332"/>
    </location>
</feature>
<feature type="binding site" evidence="1">
    <location>
        <position position="35"/>
    </location>
    <ligand>
        <name>FAD</name>
        <dbReference type="ChEBI" id="CHEBI:57692"/>
    </ligand>
</feature>
<feature type="binding site" evidence="1">
    <location>
        <position position="43"/>
    </location>
    <ligand>
        <name>FAD</name>
        <dbReference type="ChEBI" id="CHEBI:57692"/>
    </ligand>
</feature>
<feature type="binding site" evidence="1">
    <location>
        <position position="48"/>
    </location>
    <ligand>
        <name>FAD</name>
        <dbReference type="ChEBI" id="CHEBI:57692"/>
    </ligand>
</feature>
<feature type="binding site" evidence="1">
    <location>
        <position position="88"/>
    </location>
    <ligand>
        <name>FAD</name>
        <dbReference type="ChEBI" id="CHEBI:57692"/>
    </ligand>
</feature>
<feature type="binding site" evidence="1">
    <location>
        <position position="122"/>
    </location>
    <ligand>
        <name>FAD</name>
        <dbReference type="ChEBI" id="CHEBI:57692"/>
    </ligand>
</feature>
<feature type="binding site" evidence="1">
    <location>
        <position position="286"/>
    </location>
    <ligand>
        <name>FAD</name>
        <dbReference type="ChEBI" id="CHEBI:57692"/>
    </ligand>
</feature>
<feature type="binding site" evidence="1">
    <location>
        <position position="326"/>
    </location>
    <ligand>
        <name>FAD</name>
        <dbReference type="ChEBI" id="CHEBI:57692"/>
    </ligand>
</feature>
<keyword id="KW-0274">FAD</keyword>
<keyword id="KW-0285">Flavoprotein</keyword>
<keyword id="KW-0521">NADP</keyword>
<keyword id="KW-0560">Oxidoreductase</keyword>
<keyword id="KW-1185">Reference proteome</keyword>